<feature type="chain" id="PRO_0000267776" description="Nucleoside diphosphate kinase">
    <location>
        <begin position="1"/>
        <end position="149"/>
    </location>
</feature>
<feature type="active site" description="Pros-phosphohistidine intermediate" evidence="1">
    <location>
        <position position="115"/>
    </location>
</feature>
<feature type="binding site" evidence="1">
    <location>
        <position position="9"/>
    </location>
    <ligand>
        <name>ATP</name>
        <dbReference type="ChEBI" id="CHEBI:30616"/>
    </ligand>
</feature>
<feature type="binding site" evidence="1">
    <location>
        <position position="57"/>
    </location>
    <ligand>
        <name>ATP</name>
        <dbReference type="ChEBI" id="CHEBI:30616"/>
    </ligand>
</feature>
<feature type="binding site" evidence="1">
    <location>
        <position position="85"/>
    </location>
    <ligand>
        <name>ATP</name>
        <dbReference type="ChEBI" id="CHEBI:30616"/>
    </ligand>
</feature>
<feature type="binding site" evidence="1">
    <location>
        <position position="91"/>
    </location>
    <ligand>
        <name>ATP</name>
        <dbReference type="ChEBI" id="CHEBI:30616"/>
    </ligand>
</feature>
<feature type="binding site" evidence="1">
    <location>
        <position position="102"/>
    </location>
    <ligand>
        <name>ATP</name>
        <dbReference type="ChEBI" id="CHEBI:30616"/>
    </ligand>
</feature>
<feature type="binding site" evidence="1">
    <location>
        <position position="112"/>
    </location>
    <ligand>
        <name>ATP</name>
        <dbReference type="ChEBI" id="CHEBI:30616"/>
    </ligand>
</feature>
<comment type="function">
    <text evidence="1">Major role in the synthesis of nucleoside triphosphates other than ATP. The ATP gamma phosphate is transferred to the NDP beta phosphate via a ping-pong mechanism, using a phosphorylated active-site intermediate.</text>
</comment>
<comment type="catalytic activity">
    <reaction evidence="1">
        <text>a 2'-deoxyribonucleoside 5'-diphosphate + ATP = a 2'-deoxyribonucleoside 5'-triphosphate + ADP</text>
        <dbReference type="Rhea" id="RHEA:44640"/>
        <dbReference type="ChEBI" id="CHEBI:30616"/>
        <dbReference type="ChEBI" id="CHEBI:61560"/>
        <dbReference type="ChEBI" id="CHEBI:73316"/>
        <dbReference type="ChEBI" id="CHEBI:456216"/>
        <dbReference type="EC" id="2.7.4.6"/>
    </reaction>
</comment>
<comment type="catalytic activity">
    <reaction evidence="1">
        <text>a ribonucleoside 5'-diphosphate + ATP = a ribonucleoside 5'-triphosphate + ADP</text>
        <dbReference type="Rhea" id="RHEA:18113"/>
        <dbReference type="ChEBI" id="CHEBI:30616"/>
        <dbReference type="ChEBI" id="CHEBI:57930"/>
        <dbReference type="ChEBI" id="CHEBI:61557"/>
        <dbReference type="ChEBI" id="CHEBI:456216"/>
        <dbReference type="EC" id="2.7.4.6"/>
    </reaction>
</comment>
<comment type="cofactor">
    <cofactor evidence="1">
        <name>Mg(2+)</name>
        <dbReference type="ChEBI" id="CHEBI:18420"/>
    </cofactor>
</comment>
<comment type="subunit">
    <text evidence="1">Homotetramer.</text>
</comment>
<comment type="subcellular location">
    <subcellularLocation>
        <location evidence="1">Cytoplasm</location>
    </subcellularLocation>
</comment>
<comment type="similarity">
    <text evidence="1">Belongs to the NDK family.</text>
</comment>
<name>NDK_DESHY</name>
<organism>
    <name type="scientific">Desulfitobacterium hafniense (strain Y51)</name>
    <dbReference type="NCBI Taxonomy" id="138119"/>
    <lineage>
        <taxon>Bacteria</taxon>
        <taxon>Bacillati</taxon>
        <taxon>Bacillota</taxon>
        <taxon>Clostridia</taxon>
        <taxon>Eubacteriales</taxon>
        <taxon>Desulfitobacteriaceae</taxon>
        <taxon>Desulfitobacterium</taxon>
    </lineage>
</organism>
<evidence type="ECO:0000255" key="1">
    <source>
        <dbReference type="HAMAP-Rule" id="MF_00451"/>
    </source>
</evidence>
<reference key="1">
    <citation type="journal article" date="2006" name="J. Bacteriol.">
        <title>Complete genome sequence of the dehalorespiring bacterium Desulfitobacterium hafniense Y51 and comparison with Dehalococcoides ethenogenes 195.</title>
        <authorList>
            <person name="Nonaka H."/>
            <person name="Keresztes G."/>
            <person name="Shinoda Y."/>
            <person name="Ikenaga Y."/>
            <person name="Abe M."/>
            <person name="Naito K."/>
            <person name="Inatomi K."/>
            <person name="Furukawa K."/>
            <person name="Inui M."/>
            <person name="Yukawa H."/>
        </authorList>
    </citation>
    <scope>NUCLEOTIDE SEQUENCE [LARGE SCALE GENOMIC DNA]</scope>
    <source>
        <strain>Y51</strain>
    </source>
</reference>
<dbReference type="EC" id="2.7.4.6" evidence="1"/>
<dbReference type="EMBL" id="AP008230">
    <property type="protein sequence ID" value="BAE81991.1"/>
    <property type="molecule type" value="Genomic_DNA"/>
</dbReference>
<dbReference type="RefSeq" id="WP_005809738.1">
    <property type="nucleotide sequence ID" value="NC_007907.1"/>
</dbReference>
<dbReference type="SMR" id="Q251Q1"/>
<dbReference type="STRING" id="138119.DSY0202"/>
<dbReference type="KEGG" id="dsy:DSY0202"/>
<dbReference type="eggNOG" id="COG0105">
    <property type="taxonomic scope" value="Bacteria"/>
</dbReference>
<dbReference type="HOGENOM" id="CLU_060216_6_3_9"/>
<dbReference type="Proteomes" id="UP000001946">
    <property type="component" value="Chromosome"/>
</dbReference>
<dbReference type="GO" id="GO:0005737">
    <property type="term" value="C:cytoplasm"/>
    <property type="evidence" value="ECO:0007669"/>
    <property type="project" value="UniProtKB-SubCell"/>
</dbReference>
<dbReference type="GO" id="GO:0005524">
    <property type="term" value="F:ATP binding"/>
    <property type="evidence" value="ECO:0007669"/>
    <property type="project" value="UniProtKB-UniRule"/>
</dbReference>
<dbReference type="GO" id="GO:0046872">
    <property type="term" value="F:metal ion binding"/>
    <property type="evidence" value="ECO:0007669"/>
    <property type="project" value="UniProtKB-KW"/>
</dbReference>
<dbReference type="GO" id="GO:0004550">
    <property type="term" value="F:nucleoside diphosphate kinase activity"/>
    <property type="evidence" value="ECO:0007669"/>
    <property type="project" value="UniProtKB-UniRule"/>
</dbReference>
<dbReference type="GO" id="GO:0006241">
    <property type="term" value="P:CTP biosynthetic process"/>
    <property type="evidence" value="ECO:0007669"/>
    <property type="project" value="UniProtKB-UniRule"/>
</dbReference>
<dbReference type="GO" id="GO:0006183">
    <property type="term" value="P:GTP biosynthetic process"/>
    <property type="evidence" value="ECO:0007669"/>
    <property type="project" value="UniProtKB-UniRule"/>
</dbReference>
<dbReference type="GO" id="GO:0006228">
    <property type="term" value="P:UTP biosynthetic process"/>
    <property type="evidence" value="ECO:0007669"/>
    <property type="project" value="UniProtKB-UniRule"/>
</dbReference>
<dbReference type="CDD" id="cd04413">
    <property type="entry name" value="NDPk_I"/>
    <property type="match status" value="1"/>
</dbReference>
<dbReference type="FunFam" id="3.30.70.141:FF:000002">
    <property type="entry name" value="Nucleoside diphosphate kinase"/>
    <property type="match status" value="1"/>
</dbReference>
<dbReference type="Gene3D" id="3.30.70.141">
    <property type="entry name" value="Nucleoside diphosphate kinase-like domain"/>
    <property type="match status" value="1"/>
</dbReference>
<dbReference type="HAMAP" id="MF_00451">
    <property type="entry name" value="NDP_kinase"/>
    <property type="match status" value="1"/>
</dbReference>
<dbReference type="InterPro" id="IPR034907">
    <property type="entry name" value="NDK-like_dom"/>
</dbReference>
<dbReference type="InterPro" id="IPR036850">
    <property type="entry name" value="NDK-like_dom_sf"/>
</dbReference>
<dbReference type="InterPro" id="IPR001564">
    <property type="entry name" value="Nucleoside_diP_kinase"/>
</dbReference>
<dbReference type="InterPro" id="IPR023005">
    <property type="entry name" value="Nucleoside_diP_kinase_AS"/>
</dbReference>
<dbReference type="NCBIfam" id="NF001908">
    <property type="entry name" value="PRK00668.1"/>
    <property type="match status" value="1"/>
</dbReference>
<dbReference type="PANTHER" id="PTHR11349">
    <property type="entry name" value="NUCLEOSIDE DIPHOSPHATE KINASE"/>
    <property type="match status" value="1"/>
</dbReference>
<dbReference type="Pfam" id="PF00334">
    <property type="entry name" value="NDK"/>
    <property type="match status" value="1"/>
</dbReference>
<dbReference type="PRINTS" id="PR01243">
    <property type="entry name" value="NUCDPKINASE"/>
</dbReference>
<dbReference type="SMART" id="SM00562">
    <property type="entry name" value="NDK"/>
    <property type="match status" value="1"/>
</dbReference>
<dbReference type="SUPFAM" id="SSF54919">
    <property type="entry name" value="Nucleoside diphosphate kinase, NDK"/>
    <property type="match status" value="1"/>
</dbReference>
<dbReference type="PROSITE" id="PS00469">
    <property type="entry name" value="NDPK"/>
    <property type="match status" value="1"/>
</dbReference>
<dbReference type="PROSITE" id="PS51374">
    <property type="entry name" value="NDPK_LIKE"/>
    <property type="match status" value="1"/>
</dbReference>
<protein>
    <recommendedName>
        <fullName evidence="1">Nucleoside diphosphate kinase</fullName>
        <shortName evidence="1">NDK</shortName>
        <shortName evidence="1">NDP kinase</shortName>
        <ecNumber evidence="1">2.7.4.6</ecNumber>
    </recommendedName>
    <alternativeName>
        <fullName evidence="1">Nucleoside-2-P kinase</fullName>
    </alternativeName>
</protein>
<keyword id="KW-0067">ATP-binding</keyword>
<keyword id="KW-0963">Cytoplasm</keyword>
<keyword id="KW-0418">Kinase</keyword>
<keyword id="KW-0460">Magnesium</keyword>
<keyword id="KW-0479">Metal-binding</keyword>
<keyword id="KW-0546">Nucleotide metabolism</keyword>
<keyword id="KW-0547">Nucleotide-binding</keyword>
<keyword id="KW-0597">Phosphoprotein</keyword>
<keyword id="KW-1185">Reference proteome</keyword>
<keyword id="KW-0808">Transferase</keyword>
<accession>Q251Q1</accession>
<proteinExistence type="inferred from homology"/>
<gene>
    <name evidence="1" type="primary">ndk</name>
    <name type="ordered locus">DSY0202</name>
</gene>
<sequence>MEKTFIMLKPDAVQRGLVGQIIARFETKGCKLVGMKLMSVDQALAEQHYAEHKGKSFFEPTVQYIMSSPVVAMVWEGKNVVALARELMGATNPANANPGSIRGSFGMDISRNVIHGSDSVASAEREIALYFRPEELCDYRKAGEEWLSE</sequence>